<keyword id="KW-1185">Reference proteome</keyword>
<keyword id="KW-0687">Ribonucleoprotein</keyword>
<keyword id="KW-0689">Ribosomal protein</keyword>
<keyword id="KW-0694">RNA-binding</keyword>
<keyword id="KW-0699">rRNA-binding</keyword>
<name>RS5_NATTJ</name>
<organism>
    <name type="scientific">Natranaerobius thermophilus (strain ATCC BAA-1301 / DSM 18059 / JW/NM-WN-LF)</name>
    <dbReference type="NCBI Taxonomy" id="457570"/>
    <lineage>
        <taxon>Bacteria</taxon>
        <taxon>Bacillati</taxon>
        <taxon>Bacillota</taxon>
        <taxon>Clostridia</taxon>
        <taxon>Natranaerobiales</taxon>
        <taxon>Natranaerobiaceae</taxon>
        <taxon>Natranaerobius</taxon>
    </lineage>
</organism>
<sequence length="168" mass="17785">MRRKDFDPNKLDLSEKVVEINRVTKVVKGGRRFSFSALVVVGDENGYVGAGNGKAVEVPEAIRKGIEDAKKNLIKVPMVGTTIPHEIVGRDGGGQVLLKPAYEGTGVIAGGPVRAVLEQAGIRDILTKSLGSNNAKSMVNATIAGLNQLKTAEQVARLRGISVKDLQG</sequence>
<proteinExistence type="inferred from homology"/>
<evidence type="ECO:0000255" key="1">
    <source>
        <dbReference type="HAMAP-Rule" id="MF_01307"/>
    </source>
</evidence>
<evidence type="ECO:0000305" key="2"/>
<reference key="1">
    <citation type="submission" date="2008-04" db="EMBL/GenBank/DDBJ databases">
        <title>Complete sequence of chromosome of Natranaerobius thermophilus JW/NM-WN-LF.</title>
        <authorList>
            <consortium name="US DOE Joint Genome Institute"/>
            <person name="Copeland A."/>
            <person name="Lucas S."/>
            <person name="Lapidus A."/>
            <person name="Glavina del Rio T."/>
            <person name="Dalin E."/>
            <person name="Tice H."/>
            <person name="Bruce D."/>
            <person name="Goodwin L."/>
            <person name="Pitluck S."/>
            <person name="Chertkov O."/>
            <person name="Brettin T."/>
            <person name="Detter J.C."/>
            <person name="Han C."/>
            <person name="Kuske C.R."/>
            <person name="Schmutz J."/>
            <person name="Larimer F."/>
            <person name="Land M."/>
            <person name="Hauser L."/>
            <person name="Kyrpides N."/>
            <person name="Lykidis A."/>
            <person name="Mesbah N.M."/>
            <person name="Wiegel J."/>
        </authorList>
    </citation>
    <scope>NUCLEOTIDE SEQUENCE [LARGE SCALE GENOMIC DNA]</scope>
    <source>
        <strain>ATCC BAA-1301 / DSM 18059 / JW/NM-WN-LF</strain>
    </source>
</reference>
<gene>
    <name evidence="1" type="primary">rpsE</name>
    <name type="ordered locus">Nther_0211</name>
</gene>
<feature type="chain" id="PRO_1000214320" description="Small ribosomal subunit protein uS5">
    <location>
        <begin position="1"/>
        <end position="168"/>
    </location>
</feature>
<feature type="domain" description="S5 DRBM" evidence="1">
    <location>
        <begin position="13"/>
        <end position="76"/>
    </location>
</feature>
<accession>B2A4F6</accession>
<comment type="function">
    <text evidence="1">With S4 and S12 plays an important role in translational accuracy.</text>
</comment>
<comment type="function">
    <text evidence="1">Located at the back of the 30S subunit body where it stabilizes the conformation of the head with respect to the body.</text>
</comment>
<comment type="subunit">
    <text evidence="1">Part of the 30S ribosomal subunit. Contacts proteins S4 and S8.</text>
</comment>
<comment type="domain">
    <text>The N-terminal domain interacts with the head of the 30S subunit; the C-terminal domain interacts with the body and contacts protein S4. The interaction surface between S4 and S5 is involved in control of translational fidelity.</text>
</comment>
<comment type="similarity">
    <text evidence="1">Belongs to the universal ribosomal protein uS5 family.</text>
</comment>
<dbReference type="EMBL" id="CP001034">
    <property type="protein sequence ID" value="ACB83810.1"/>
    <property type="molecule type" value="Genomic_DNA"/>
</dbReference>
<dbReference type="RefSeq" id="WP_012446699.1">
    <property type="nucleotide sequence ID" value="NC_010718.1"/>
</dbReference>
<dbReference type="SMR" id="B2A4F6"/>
<dbReference type="FunCoup" id="B2A4F6">
    <property type="interactions" value="472"/>
</dbReference>
<dbReference type="STRING" id="457570.Nther_0211"/>
<dbReference type="KEGG" id="nth:Nther_0211"/>
<dbReference type="eggNOG" id="COG0098">
    <property type="taxonomic scope" value="Bacteria"/>
</dbReference>
<dbReference type="HOGENOM" id="CLU_065898_2_2_9"/>
<dbReference type="InParanoid" id="B2A4F6"/>
<dbReference type="OrthoDB" id="9809045at2"/>
<dbReference type="Proteomes" id="UP000001683">
    <property type="component" value="Chromosome"/>
</dbReference>
<dbReference type="GO" id="GO:0015935">
    <property type="term" value="C:small ribosomal subunit"/>
    <property type="evidence" value="ECO:0007669"/>
    <property type="project" value="InterPro"/>
</dbReference>
<dbReference type="GO" id="GO:0019843">
    <property type="term" value="F:rRNA binding"/>
    <property type="evidence" value="ECO:0007669"/>
    <property type="project" value="UniProtKB-UniRule"/>
</dbReference>
<dbReference type="GO" id="GO:0003735">
    <property type="term" value="F:structural constituent of ribosome"/>
    <property type="evidence" value="ECO:0007669"/>
    <property type="project" value="InterPro"/>
</dbReference>
<dbReference type="GO" id="GO:0006412">
    <property type="term" value="P:translation"/>
    <property type="evidence" value="ECO:0007669"/>
    <property type="project" value="UniProtKB-UniRule"/>
</dbReference>
<dbReference type="FunFam" id="3.30.160.20:FF:000001">
    <property type="entry name" value="30S ribosomal protein S5"/>
    <property type="match status" value="1"/>
</dbReference>
<dbReference type="FunFam" id="3.30.230.10:FF:000002">
    <property type="entry name" value="30S ribosomal protein S5"/>
    <property type="match status" value="1"/>
</dbReference>
<dbReference type="Gene3D" id="3.30.160.20">
    <property type="match status" value="1"/>
</dbReference>
<dbReference type="Gene3D" id="3.30.230.10">
    <property type="match status" value="1"/>
</dbReference>
<dbReference type="HAMAP" id="MF_01307_B">
    <property type="entry name" value="Ribosomal_uS5_B"/>
    <property type="match status" value="1"/>
</dbReference>
<dbReference type="InterPro" id="IPR020568">
    <property type="entry name" value="Ribosomal_Su5_D2-typ_SF"/>
</dbReference>
<dbReference type="InterPro" id="IPR000851">
    <property type="entry name" value="Ribosomal_uS5"/>
</dbReference>
<dbReference type="InterPro" id="IPR005712">
    <property type="entry name" value="Ribosomal_uS5_bac-type"/>
</dbReference>
<dbReference type="InterPro" id="IPR005324">
    <property type="entry name" value="Ribosomal_uS5_C"/>
</dbReference>
<dbReference type="InterPro" id="IPR013810">
    <property type="entry name" value="Ribosomal_uS5_N"/>
</dbReference>
<dbReference type="InterPro" id="IPR018192">
    <property type="entry name" value="Ribosomal_uS5_N_CS"/>
</dbReference>
<dbReference type="InterPro" id="IPR014721">
    <property type="entry name" value="Ribsml_uS5_D2-typ_fold_subgr"/>
</dbReference>
<dbReference type="NCBIfam" id="TIGR01021">
    <property type="entry name" value="rpsE_bact"/>
    <property type="match status" value="1"/>
</dbReference>
<dbReference type="PANTHER" id="PTHR48277">
    <property type="entry name" value="MITOCHONDRIAL RIBOSOMAL PROTEIN S5"/>
    <property type="match status" value="1"/>
</dbReference>
<dbReference type="PANTHER" id="PTHR48277:SF1">
    <property type="entry name" value="MITOCHONDRIAL RIBOSOMAL PROTEIN S5"/>
    <property type="match status" value="1"/>
</dbReference>
<dbReference type="Pfam" id="PF00333">
    <property type="entry name" value="Ribosomal_S5"/>
    <property type="match status" value="1"/>
</dbReference>
<dbReference type="Pfam" id="PF03719">
    <property type="entry name" value="Ribosomal_S5_C"/>
    <property type="match status" value="1"/>
</dbReference>
<dbReference type="SUPFAM" id="SSF54768">
    <property type="entry name" value="dsRNA-binding domain-like"/>
    <property type="match status" value="1"/>
</dbReference>
<dbReference type="SUPFAM" id="SSF54211">
    <property type="entry name" value="Ribosomal protein S5 domain 2-like"/>
    <property type="match status" value="1"/>
</dbReference>
<dbReference type="PROSITE" id="PS00585">
    <property type="entry name" value="RIBOSOMAL_S5"/>
    <property type="match status" value="1"/>
</dbReference>
<dbReference type="PROSITE" id="PS50881">
    <property type="entry name" value="S5_DSRBD"/>
    <property type="match status" value="1"/>
</dbReference>
<protein>
    <recommendedName>
        <fullName evidence="1">Small ribosomal subunit protein uS5</fullName>
    </recommendedName>
    <alternativeName>
        <fullName evidence="2">30S ribosomal protein S5</fullName>
    </alternativeName>
</protein>